<reference key="1">
    <citation type="journal article" date="2006" name="BMC Genomics">
        <title>The genome of the square archaeon Haloquadratum walsbyi: life at the limits of water activity.</title>
        <authorList>
            <person name="Bolhuis H."/>
            <person name="Palm P."/>
            <person name="Wende A."/>
            <person name="Falb M."/>
            <person name="Rampp M."/>
            <person name="Rodriguez-Valera F."/>
            <person name="Pfeiffer F."/>
            <person name="Oesterhelt D."/>
        </authorList>
    </citation>
    <scope>NUCLEOTIDE SEQUENCE [LARGE SCALE GENOMIC DNA]</scope>
    <source>
        <strain>DSM 16790 / HBSQ001</strain>
    </source>
</reference>
<keyword id="KW-0963">Cytoplasm</keyword>
<keyword id="KW-0378">Hydrolase</keyword>
<keyword id="KW-0520">NAD</keyword>
<keyword id="KW-0554">One-carbon metabolism</keyword>
<keyword id="KW-1185">Reference proteome</keyword>
<organism>
    <name type="scientific">Haloquadratum walsbyi (strain DSM 16790 / HBSQ001)</name>
    <dbReference type="NCBI Taxonomy" id="362976"/>
    <lineage>
        <taxon>Archaea</taxon>
        <taxon>Methanobacteriati</taxon>
        <taxon>Methanobacteriota</taxon>
        <taxon>Stenosarchaea group</taxon>
        <taxon>Halobacteria</taxon>
        <taxon>Halobacteriales</taxon>
        <taxon>Haloferacaceae</taxon>
        <taxon>Haloquadratum</taxon>
    </lineage>
</organism>
<protein>
    <recommendedName>
        <fullName evidence="1">Adenosylhomocysteinase</fullName>
        <ecNumber evidence="1">3.13.2.1</ecNumber>
    </recommendedName>
    <alternativeName>
        <fullName evidence="1">S-adenosyl-L-homocysteine hydrolase</fullName>
        <shortName evidence="1">AdoHcyase</shortName>
    </alternativeName>
</protein>
<gene>
    <name evidence="1" type="primary">ahcY</name>
    <name type="ordered locus">HQ_3414A</name>
</gene>
<sequence>MSAYSPLSAQLDADTDVDVESTRTEGRRKMEWTLQHMPILQELRARFAETKPLAGETIGMAMHVEAKTANLVELLALGGAEVAITGCNPLSTHDDVSAALDSNENVTSYAKRGVDEEAYYDAIEAVVAHEPTITIDDGMDMVYAIHEDHPDLLDTIIGGAEETTTGVHRLRAMDEDDELQYPVFAVNDTPMKRLFDNVHGTGESALATIAMTTNLSYAGKNVVVAGYGYCGKGVAQKAAGQNANVIVTEVEPRRALEAHMEGYEVMPMNEAATRGDVFVTTTGNRDVITQEDFEVMSDGAILANAGHFDVEINLEELSELAIDTYEARDGVQAYELGDGRRLNVLAEGRLVNLAAPIALGHPAEVMDQSFGIQAVCVRELIENKSSYDAGVHNVPDELDREVAEIKLKAEGVDIDSLTQTQSEYLDSWSHGT</sequence>
<feature type="chain" id="PRO_0000260219" description="Adenosylhomocysteinase">
    <location>
        <begin position="1"/>
        <end position="432"/>
    </location>
</feature>
<feature type="region of interest" description="Disordered" evidence="2">
    <location>
        <begin position="1"/>
        <end position="24"/>
    </location>
</feature>
<feature type="binding site" evidence="1">
    <location>
        <position position="137"/>
    </location>
    <ligand>
        <name>substrate</name>
    </ligand>
</feature>
<feature type="binding site" evidence="1">
    <location>
        <position position="162"/>
    </location>
    <ligand>
        <name>substrate</name>
    </ligand>
</feature>
<feature type="binding site" evidence="1">
    <location>
        <begin position="163"/>
        <end position="165"/>
    </location>
    <ligand>
        <name>NAD(+)</name>
        <dbReference type="ChEBI" id="CHEBI:57540"/>
    </ligand>
</feature>
<feature type="binding site" evidence="1">
    <location>
        <position position="192"/>
    </location>
    <ligand>
        <name>substrate</name>
    </ligand>
</feature>
<feature type="binding site" evidence="1">
    <location>
        <position position="196"/>
    </location>
    <ligand>
        <name>substrate</name>
    </ligand>
</feature>
<feature type="binding site" evidence="1">
    <location>
        <position position="197"/>
    </location>
    <ligand>
        <name>NAD(+)</name>
        <dbReference type="ChEBI" id="CHEBI:57540"/>
    </ligand>
</feature>
<feature type="binding site" evidence="1">
    <location>
        <begin position="226"/>
        <end position="231"/>
    </location>
    <ligand>
        <name>NAD(+)</name>
        <dbReference type="ChEBI" id="CHEBI:57540"/>
    </ligand>
</feature>
<feature type="binding site" evidence="1">
    <location>
        <position position="249"/>
    </location>
    <ligand>
        <name>NAD(+)</name>
        <dbReference type="ChEBI" id="CHEBI:57540"/>
    </ligand>
</feature>
<feature type="binding site" evidence="1">
    <location>
        <position position="284"/>
    </location>
    <ligand>
        <name>NAD(+)</name>
        <dbReference type="ChEBI" id="CHEBI:57540"/>
    </ligand>
</feature>
<feature type="binding site" evidence="1">
    <location>
        <begin position="305"/>
        <end position="307"/>
    </location>
    <ligand>
        <name>NAD(+)</name>
        <dbReference type="ChEBI" id="CHEBI:57540"/>
    </ligand>
</feature>
<feature type="binding site" evidence="1">
    <location>
        <position position="352"/>
    </location>
    <ligand>
        <name>NAD(+)</name>
        <dbReference type="ChEBI" id="CHEBI:57540"/>
    </ligand>
</feature>
<name>SAHH_HALWD</name>
<comment type="function">
    <text evidence="1">May play a key role in the regulation of the intracellular concentration of adenosylhomocysteine.</text>
</comment>
<comment type="catalytic activity">
    <reaction evidence="1">
        <text>S-adenosyl-L-homocysteine + H2O = L-homocysteine + adenosine</text>
        <dbReference type="Rhea" id="RHEA:21708"/>
        <dbReference type="ChEBI" id="CHEBI:15377"/>
        <dbReference type="ChEBI" id="CHEBI:16335"/>
        <dbReference type="ChEBI" id="CHEBI:57856"/>
        <dbReference type="ChEBI" id="CHEBI:58199"/>
        <dbReference type="EC" id="3.13.2.1"/>
    </reaction>
</comment>
<comment type="cofactor">
    <cofactor evidence="1">
        <name>NAD(+)</name>
        <dbReference type="ChEBI" id="CHEBI:57540"/>
    </cofactor>
    <text evidence="1">Binds 1 NAD(+) per subunit.</text>
</comment>
<comment type="pathway">
    <text evidence="1">Amino-acid biosynthesis; L-homocysteine biosynthesis; L-homocysteine from S-adenosyl-L-homocysteine: step 1/1.</text>
</comment>
<comment type="subcellular location">
    <subcellularLocation>
        <location evidence="1">Cytoplasm</location>
    </subcellularLocation>
</comment>
<comment type="similarity">
    <text evidence="1">Belongs to the adenosylhomocysteinase family.</text>
</comment>
<dbReference type="EC" id="3.13.2.1" evidence="1"/>
<dbReference type="EMBL" id="AM180088">
    <property type="protein sequence ID" value="CAJ53511.1"/>
    <property type="molecule type" value="Genomic_DNA"/>
</dbReference>
<dbReference type="RefSeq" id="WP_011572608.1">
    <property type="nucleotide sequence ID" value="NC_008212.1"/>
</dbReference>
<dbReference type="SMR" id="Q18EV6"/>
<dbReference type="STRING" id="362976.HQ_3414A"/>
<dbReference type="GeneID" id="4193683"/>
<dbReference type="KEGG" id="hwa:HQ_3414A"/>
<dbReference type="eggNOG" id="arCOG04137">
    <property type="taxonomic scope" value="Archaea"/>
</dbReference>
<dbReference type="HOGENOM" id="CLU_025194_2_1_2"/>
<dbReference type="UniPathway" id="UPA00314">
    <property type="reaction ID" value="UER00076"/>
</dbReference>
<dbReference type="Proteomes" id="UP000001975">
    <property type="component" value="Chromosome"/>
</dbReference>
<dbReference type="GO" id="GO:0005829">
    <property type="term" value="C:cytosol"/>
    <property type="evidence" value="ECO:0007669"/>
    <property type="project" value="TreeGrafter"/>
</dbReference>
<dbReference type="GO" id="GO:0004013">
    <property type="term" value="F:adenosylhomocysteinase activity"/>
    <property type="evidence" value="ECO:0007669"/>
    <property type="project" value="UniProtKB-UniRule"/>
</dbReference>
<dbReference type="GO" id="GO:0071269">
    <property type="term" value="P:L-homocysteine biosynthetic process"/>
    <property type="evidence" value="ECO:0007669"/>
    <property type="project" value="UniProtKB-UniRule"/>
</dbReference>
<dbReference type="GO" id="GO:0006730">
    <property type="term" value="P:one-carbon metabolic process"/>
    <property type="evidence" value="ECO:0007669"/>
    <property type="project" value="UniProtKB-KW"/>
</dbReference>
<dbReference type="GO" id="GO:0033353">
    <property type="term" value="P:S-adenosylmethionine cycle"/>
    <property type="evidence" value="ECO:0007669"/>
    <property type="project" value="TreeGrafter"/>
</dbReference>
<dbReference type="CDD" id="cd00401">
    <property type="entry name" value="SAHH"/>
    <property type="match status" value="1"/>
</dbReference>
<dbReference type="Gene3D" id="3.40.50.1480">
    <property type="entry name" value="Adenosylhomocysteinase-like"/>
    <property type="match status" value="1"/>
</dbReference>
<dbReference type="Gene3D" id="3.40.50.720">
    <property type="entry name" value="NAD(P)-binding Rossmann-like Domain"/>
    <property type="match status" value="1"/>
</dbReference>
<dbReference type="HAMAP" id="MF_00563">
    <property type="entry name" value="AdoHcyase"/>
    <property type="match status" value="1"/>
</dbReference>
<dbReference type="InterPro" id="IPR042172">
    <property type="entry name" value="Adenosylhomocyst_ase-like_sf"/>
</dbReference>
<dbReference type="InterPro" id="IPR000043">
    <property type="entry name" value="Adenosylhomocysteinase-like"/>
</dbReference>
<dbReference type="InterPro" id="IPR015878">
    <property type="entry name" value="Ado_hCys_hydrolase_NAD-bd"/>
</dbReference>
<dbReference type="InterPro" id="IPR036291">
    <property type="entry name" value="NAD(P)-bd_dom_sf"/>
</dbReference>
<dbReference type="InterPro" id="IPR020082">
    <property type="entry name" value="S-Ado-L-homoCys_hydrolase_CS"/>
</dbReference>
<dbReference type="NCBIfam" id="TIGR00936">
    <property type="entry name" value="ahcY"/>
    <property type="match status" value="1"/>
</dbReference>
<dbReference type="NCBIfam" id="NF004005">
    <property type="entry name" value="PRK05476.2-3"/>
    <property type="match status" value="1"/>
</dbReference>
<dbReference type="PANTHER" id="PTHR23420">
    <property type="entry name" value="ADENOSYLHOMOCYSTEINASE"/>
    <property type="match status" value="1"/>
</dbReference>
<dbReference type="PANTHER" id="PTHR23420:SF0">
    <property type="entry name" value="ADENOSYLHOMOCYSTEINASE"/>
    <property type="match status" value="1"/>
</dbReference>
<dbReference type="Pfam" id="PF05221">
    <property type="entry name" value="AdoHcyase"/>
    <property type="match status" value="2"/>
</dbReference>
<dbReference type="Pfam" id="PF00670">
    <property type="entry name" value="AdoHcyase_NAD"/>
    <property type="match status" value="1"/>
</dbReference>
<dbReference type="PIRSF" id="PIRSF001109">
    <property type="entry name" value="Ad_hcy_hydrolase"/>
    <property type="match status" value="1"/>
</dbReference>
<dbReference type="SMART" id="SM00996">
    <property type="entry name" value="AdoHcyase"/>
    <property type="match status" value="1"/>
</dbReference>
<dbReference type="SMART" id="SM00997">
    <property type="entry name" value="AdoHcyase_NAD"/>
    <property type="match status" value="1"/>
</dbReference>
<dbReference type="SUPFAM" id="SSF52283">
    <property type="entry name" value="Formate/glycerate dehydrogenase catalytic domain-like"/>
    <property type="match status" value="1"/>
</dbReference>
<dbReference type="SUPFAM" id="SSF51735">
    <property type="entry name" value="NAD(P)-binding Rossmann-fold domains"/>
    <property type="match status" value="1"/>
</dbReference>
<dbReference type="PROSITE" id="PS00738">
    <property type="entry name" value="ADOHCYASE_1"/>
    <property type="match status" value="1"/>
</dbReference>
<dbReference type="PROSITE" id="PS00739">
    <property type="entry name" value="ADOHCYASE_2"/>
    <property type="match status" value="1"/>
</dbReference>
<evidence type="ECO:0000255" key="1">
    <source>
        <dbReference type="HAMAP-Rule" id="MF_00563"/>
    </source>
</evidence>
<evidence type="ECO:0000256" key="2">
    <source>
        <dbReference type="SAM" id="MobiDB-lite"/>
    </source>
</evidence>
<accession>Q18EV6</accession>
<proteinExistence type="inferred from homology"/>